<feature type="chain" id="PRO_1000127452" description="N-methyl-L-tryptophan oxidase">
    <location>
        <begin position="1"/>
        <end position="371"/>
    </location>
</feature>
<feature type="binding site" evidence="1">
    <location>
        <begin position="4"/>
        <end position="34"/>
    </location>
    <ligand>
        <name>FAD</name>
        <dbReference type="ChEBI" id="CHEBI:57692"/>
    </ligand>
</feature>
<feature type="modified residue" description="S-8alpha-FAD cysteine" evidence="1">
    <location>
        <position position="307"/>
    </location>
</feature>
<gene>
    <name evidence="1" type="primary">solA</name>
    <name type="ordered locus">YpAngola_A1706</name>
</gene>
<name>MTOX_YERPG</name>
<organism>
    <name type="scientific">Yersinia pestis bv. Antiqua (strain Angola)</name>
    <dbReference type="NCBI Taxonomy" id="349746"/>
    <lineage>
        <taxon>Bacteria</taxon>
        <taxon>Pseudomonadati</taxon>
        <taxon>Pseudomonadota</taxon>
        <taxon>Gammaproteobacteria</taxon>
        <taxon>Enterobacterales</taxon>
        <taxon>Yersiniaceae</taxon>
        <taxon>Yersinia</taxon>
    </lineage>
</organism>
<accession>A9R633</accession>
<evidence type="ECO:0000255" key="1">
    <source>
        <dbReference type="HAMAP-Rule" id="MF_00515"/>
    </source>
</evidence>
<protein>
    <recommendedName>
        <fullName evidence="1">N-methyl-L-tryptophan oxidase</fullName>
        <shortName evidence="1">MTOX</shortName>
        <ecNumber evidence="1">1.5.3.-</ecNumber>
    </recommendedName>
</protein>
<dbReference type="EC" id="1.5.3.-" evidence="1"/>
<dbReference type="EMBL" id="CP000901">
    <property type="protein sequence ID" value="ABX86353.1"/>
    <property type="molecule type" value="Genomic_DNA"/>
</dbReference>
<dbReference type="RefSeq" id="WP_002211850.1">
    <property type="nucleotide sequence ID" value="NZ_CP009935.1"/>
</dbReference>
<dbReference type="SMR" id="A9R633"/>
<dbReference type="GeneID" id="57976231"/>
<dbReference type="KEGG" id="ypg:YpAngola_A1706"/>
<dbReference type="PATRIC" id="fig|349746.12.peg.2679"/>
<dbReference type="GO" id="GO:0005829">
    <property type="term" value="C:cytosol"/>
    <property type="evidence" value="ECO:0007669"/>
    <property type="project" value="TreeGrafter"/>
</dbReference>
<dbReference type="GO" id="GO:0050660">
    <property type="term" value="F:flavin adenine dinucleotide binding"/>
    <property type="evidence" value="ECO:0007669"/>
    <property type="project" value="InterPro"/>
</dbReference>
<dbReference type="GO" id="GO:0050131">
    <property type="term" value="F:N-methyl-L-amino-acid oxidase activity"/>
    <property type="evidence" value="ECO:0007669"/>
    <property type="project" value="InterPro"/>
</dbReference>
<dbReference type="GO" id="GO:0008115">
    <property type="term" value="F:sarcosine oxidase activity"/>
    <property type="evidence" value="ECO:0007669"/>
    <property type="project" value="TreeGrafter"/>
</dbReference>
<dbReference type="Gene3D" id="3.30.9.10">
    <property type="entry name" value="D-Amino Acid Oxidase, subunit A, domain 2"/>
    <property type="match status" value="1"/>
</dbReference>
<dbReference type="Gene3D" id="3.50.50.60">
    <property type="entry name" value="FAD/NAD(P)-binding domain"/>
    <property type="match status" value="1"/>
</dbReference>
<dbReference type="HAMAP" id="MF_00515">
    <property type="entry name" value="MTOX"/>
    <property type="match status" value="1"/>
</dbReference>
<dbReference type="InterPro" id="IPR006076">
    <property type="entry name" value="FAD-dep_OxRdtase"/>
</dbReference>
<dbReference type="InterPro" id="IPR036188">
    <property type="entry name" value="FAD/NAD-bd_sf"/>
</dbReference>
<dbReference type="InterPro" id="IPR023493">
    <property type="entry name" value="Me_Trp_Oxase_MTOX"/>
</dbReference>
<dbReference type="InterPro" id="IPR045170">
    <property type="entry name" value="MTOX"/>
</dbReference>
<dbReference type="NCBIfam" id="NF008425">
    <property type="entry name" value="PRK11259.1"/>
    <property type="match status" value="1"/>
</dbReference>
<dbReference type="PANTHER" id="PTHR10961:SF7">
    <property type="entry name" value="FAD DEPENDENT OXIDOREDUCTASE DOMAIN-CONTAINING PROTEIN"/>
    <property type="match status" value="1"/>
</dbReference>
<dbReference type="PANTHER" id="PTHR10961">
    <property type="entry name" value="PEROXISOMAL SARCOSINE OXIDASE"/>
    <property type="match status" value="1"/>
</dbReference>
<dbReference type="Pfam" id="PF01266">
    <property type="entry name" value="DAO"/>
    <property type="match status" value="1"/>
</dbReference>
<dbReference type="SUPFAM" id="SSF54373">
    <property type="entry name" value="FAD-linked reductases, C-terminal domain"/>
    <property type="match status" value="1"/>
</dbReference>
<dbReference type="SUPFAM" id="SSF51905">
    <property type="entry name" value="FAD/NAD(P)-binding domain"/>
    <property type="match status" value="1"/>
</dbReference>
<sequence>MDYDLIVIGSGSVGSAAGYYASQAGLNVLMIDSAMPPHQAGSHHGETRIMRHAYGEGEKYVPLVLRAQALWDQLAAQTGEKLFQACGVINLGPDNSTFLQNVQRSAQQYDLPVETLNSTQIREKWPVFTVPDNYIAVFEPQSGYLRSELAVKTLIKAVTEAGCGILFNCPVTAIESHQAGVDVVTIDGTYSATKVVVTAGTWVKELLPTLPVTPVRKVFSWHQADGRYSEANHFPAFTVEMPDNILYYGFPAQNDALKLGKHHGGQLIESAAQRKPFGRYAEDGTEVFSFLRHFLPGVGVCLRGEACSYDMSPDEDFIIDTLPEDERVMVVSGLSGHGFKFATALGEVAALFAQDKPSPIDISAFSLARFR</sequence>
<keyword id="KW-0274">FAD</keyword>
<keyword id="KW-0285">Flavoprotein</keyword>
<keyword id="KW-0560">Oxidoreductase</keyword>
<comment type="function">
    <text evidence="1">Catalyzes the oxidative demethylation of N-methyl-L-tryptophan.</text>
</comment>
<comment type="catalytic activity">
    <reaction evidence="1">
        <text>N(alpha)-methyl-L-tryptophan + O2 + H2O = L-tryptophan + formaldehyde + H2O2</text>
        <dbReference type="Rhea" id="RHEA:28006"/>
        <dbReference type="ChEBI" id="CHEBI:15377"/>
        <dbReference type="ChEBI" id="CHEBI:15379"/>
        <dbReference type="ChEBI" id="CHEBI:16240"/>
        <dbReference type="ChEBI" id="CHEBI:16842"/>
        <dbReference type="ChEBI" id="CHEBI:57283"/>
        <dbReference type="ChEBI" id="CHEBI:57912"/>
    </reaction>
</comment>
<comment type="cofactor">
    <cofactor evidence="1">
        <name>FAD</name>
        <dbReference type="ChEBI" id="CHEBI:57692"/>
    </cofactor>
    <text evidence="1">Binds 1 FAD per subunit.</text>
</comment>
<comment type="subunit">
    <text evidence="1">Monomer.</text>
</comment>
<comment type="similarity">
    <text evidence="1">Belongs to the MSOX/MTOX family. MTOX subfamily.</text>
</comment>
<reference key="1">
    <citation type="journal article" date="2010" name="J. Bacteriol.">
        <title>Genome sequence of the deep-rooted Yersinia pestis strain Angola reveals new insights into the evolution and pangenome of the plague bacterium.</title>
        <authorList>
            <person name="Eppinger M."/>
            <person name="Worsham P.L."/>
            <person name="Nikolich M.P."/>
            <person name="Riley D.R."/>
            <person name="Sebastian Y."/>
            <person name="Mou S."/>
            <person name="Achtman M."/>
            <person name="Lindler L.E."/>
            <person name="Ravel J."/>
        </authorList>
    </citation>
    <scope>NUCLEOTIDE SEQUENCE [LARGE SCALE GENOMIC DNA]</scope>
    <source>
        <strain>Angola</strain>
    </source>
</reference>
<proteinExistence type="inferred from homology"/>